<protein>
    <recommendedName>
        <fullName evidence="3">Large ribosomal subunit protein bL32c</fullName>
    </recommendedName>
    <alternativeName>
        <fullName>50S ribosomal protein L32, chloroplastic</fullName>
    </alternativeName>
</protein>
<keyword id="KW-0150">Chloroplast</keyword>
<keyword id="KW-0934">Plastid</keyword>
<keyword id="KW-1185">Reference proteome</keyword>
<keyword id="KW-0687">Ribonucleoprotein</keyword>
<keyword id="KW-0689">Ribosomal protein</keyword>
<sequence>MAVPKKRTSMSKKRIRKNLWKKKTYFSIVQSYSLAKSRSFSGVSEHPKPKGFSRQQTNK</sequence>
<organism>
    <name type="scientific">Oryza sativa subsp. indica</name>
    <name type="common">Rice</name>
    <dbReference type="NCBI Taxonomy" id="39946"/>
    <lineage>
        <taxon>Eukaryota</taxon>
        <taxon>Viridiplantae</taxon>
        <taxon>Streptophyta</taxon>
        <taxon>Embryophyta</taxon>
        <taxon>Tracheophyta</taxon>
        <taxon>Spermatophyta</taxon>
        <taxon>Magnoliopsida</taxon>
        <taxon>Liliopsida</taxon>
        <taxon>Poales</taxon>
        <taxon>Poaceae</taxon>
        <taxon>BOP clade</taxon>
        <taxon>Oryzoideae</taxon>
        <taxon>Oryzeae</taxon>
        <taxon>Oryzinae</taxon>
        <taxon>Oryza</taxon>
        <taxon>Oryza sativa</taxon>
    </lineage>
</organism>
<reference key="1">
    <citation type="journal article" date="2004" name="Plant Physiol.">
        <title>A comparison of rice chloroplast genomes.</title>
        <authorList>
            <person name="Tang J."/>
            <person name="Xia H."/>
            <person name="Cao M."/>
            <person name="Zhang X."/>
            <person name="Zeng W."/>
            <person name="Hu S."/>
            <person name="Tong W."/>
            <person name="Wang J."/>
            <person name="Wang J."/>
            <person name="Yu J."/>
            <person name="Yang H."/>
            <person name="Zhu L."/>
        </authorList>
    </citation>
    <scope>NUCLEOTIDE SEQUENCE [LARGE SCALE GENOMIC DNA]</scope>
    <source>
        <strain>cv. 93-11</strain>
    </source>
</reference>
<comment type="subcellular location">
    <subcellularLocation>
        <location>Plastid</location>
        <location>Chloroplast</location>
    </subcellularLocation>
</comment>
<comment type="similarity">
    <text evidence="3">Belongs to the bacterial ribosomal protein bL32 family.</text>
</comment>
<proteinExistence type="inferred from homology"/>
<accession>P0C453</accession>
<accession>P12197</accession>
<accession>Q6QXR3</accession>
<accession>Q6QY39</accession>
<feature type="initiator methionine" description="Removed" evidence="1">
    <location>
        <position position="1"/>
    </location>
</feature>
<feature type="chain" id="PRO_0000290051" description="Large ribosomal subunit protein bL32c">
    <location>
        <begin position="2"/>
        <end position="59"/>
    </location>
</feature>
<feature type="region of interest" description="Disordered" evidence="2">
    <location>
        <begin position="36"/>
        <end position="59"/>
    </location>
</feature>
<evidence type="ECO:0000250" key="1"/>
<evidence type="ECO:0000256" key="2">
    <source>
        <dbReference type="SAM" id="MobiDB-lite"/>
    </source>
</evidence>
<evidence type="ECO:0000305" key="3"/>
<gene>
    <name type="primary">rpl32</name>
    <name type="ORF">9311165</name>
</gene>
<dbReference type="EMBL" id="AY522329">
    <property type="protein sequence ID" value="AAS46090.1"/>
    <property type="molecule type" value="Genomic_DNA"/>
</dbReference>
<dbReference type="RefSeq" id="YP_654250.1">
    <property type="nucleotide sequence ID" value="NC_008155.1"/>
</dbReference>
<dbReference type="SMR" id="P0C453"/>
<dbReference type="STRING" id="39946.P0C453"/>
<dbReference type="GeneID" id="4126908"/>
<dbReference type="Proteomes" id="UP000007015">
    <property type="component" value="Chloroplast"/>
</dbReference>
<dbReference type="GO" id="GO:0009507">
    <property type="term" value="C:chloroplast"/>
    <property type="evidence" value="ECO:0007669"/>
    <property type="project" value="UniProtKB-SubCell"/>
</dbReference>
<dbReference type="GO" id="GO:0015934">
    <property type="term" value="C:large ribosomal subunit"/>
    <property type="evidence" value="ECO:0007669"/>
    <property type="project" value="InterPro"/>
</dbReference>
<dbReference type="GO" id="GO:0009536">
    <property type="term" value="C:plastid"/>
    <property type="evidence" value="ECO:0000305"/>
    <property type="project" value="Gramene"/>
</dbReference>
<dbReference type="GO" id="GO:0003735">
    <property type="term" value="F:structural constituent of ribosome"/>
    <property type="evidence" value="ECO:0007669"/>
    <property type="project" value="InterPro"/>
</dbReference>
<dbReference type="GO" id="GO:0006412">
    <property type="term" value="P:translation"/>
    <property type="evidence" value="ECO:0007669"/>
    <property type="project" value="UniProtKB-UniRule"/>
</dbReference>
<dbReference type="HAMAP" id="MF_00340">
    <property type="entry name" value="Ribosomal_bL32"/>
    <property type="match status" value="1"/>
</dbReference>
<dbReference type="InterPro" id="IPR002677">
    <property type="entry name" value="Ribosomal_bL32"/>
</dbReference>
<dbReference type="InterPro" id="IPR044958">
    <property type="entry name" value="Ribosomal_bL32_plant/cyanobact"/>
</dbReference>
<dbReference type="InterPro" id="IPR011332">
    <property type="entry name" value="Ribosomal_zn-bd"/>
</dbReference>
<dbReference type="PANTHER" id="PTHR36083">
    <property type="entry name" value="50S RIBOSOMAL PROTEIN L32, CHLOROPLASTIC"/>
    <property type="match status" value="1"/>
</dbReference>
<dbReference type="PANTHER" id="PTHR36083:SF1">
    <property type="entry name" value="LARGE RIBOSOMAL SUBUNIT PROTEIN BL32C"/>
    <property type="match status" value="1"/>
</dbReference>
<dbReference type="Pfam" id="PF01783">
    <property type="entry name" value="Ribosomal_L32p"/>
    <property type="match status" value="1"/>
</dbReference>
<dbReference type="SUPFAM" id="SSF57829">
    <property type="entry name" value="Zn-binding ribosomal proteins"/>
    <property type="match status" value="1"/>
</dbReference>
<geneLocation type="chloroplast"/>
<name>RK32_ORYSI</name>